<reference key="1">
    <citation type="journal article" date="2006" name="Nat. Genet.">
        <title>The multidrug-resistant human pathogen Clostridium difficile has a highly mobile, mosaic genome.</title>
        <authorList>
            <person name="Sebaihia M."/>
            <person name="Wren B.W."/>
            <person name="Mullany P."/>
            <person name="Fairweather N.F."/>
            <person name="Minton N."/>
            <person name="Stabler R."/>
            <person name="Thomson N.R."/>
            <person name="Roberts A.P."/>
            <person name="Cerdeno-Tarraga A.M."/>
            <person name="Wang H."/>
            <person name="Holden M.T.G."/>
            <person name="Wright A."/>
            <person name="Churcher C."/>
            <person name="Quail M.A."/>
            <person name="Baker S."/>
            <person name="Bason N."/>
            <person name="Brooks K."/>
            <person name="Chillingworth T."/>
            <person name="Cronin A."/>
            <person name="Davis P."/>
            <person name="Dowd L."/>
            <person name="Fraser A."/>
            <person name="Feltwell T."/>
            <person name="Hance Z."/>
            <person name="Holroyd S."/>
            <person name="Jagels K."/>
            <person name="Moule S."/>
            <person name="Mungall K."/>
            <person name="Price C."/>
            <person name="Rabbinowitsch E."/>
            <person name="Sharp S."/>
            <person name="Simmonds M."/>
            <person name="Stevens K."/>
            <person name="Unwin L."/>
            <person name="Whithead S."/>
            <person name="Dupuy B."/>
            <person name="Dougan G."/>
            <person name="Barrell B."/>
            <person name="Parkhill J."/>
        </authorList>
    </citation>
    <scope>NUCLEOTIDE SEQUENCE [LARGE SCALE GENOMIC DNA]</scope>
    <source>
        <strain>630</strain>
    </source>
</reference>
<accession>Q18CX3</accession>
<evidence type="ECO:0000255" key="1">
    <source>
        <dbReference type="HAMAP-Rule" id="MF_00167"/>
    </source>
</evidence>
<protein>
    <recommendedName>
        <fullName evidence="1">Translational regulator CsrA</fullName>
    </recommendedName>
</protein>
<sequence>MLVISRKKDEAVLIGDNIEVKVVGVDGNNIKLAISAPNNISILRKEIYEKVKNENIKATNKNIKILKSLK</sequence>
<comment type="function">
    <text evidence="1">A translational regulator that binds mRNA to regulate translation initiation and/or mRNA stability. Usually binds in the 5'-UTR at or near the Shine-Dalgarno sequence preventing ribosome-binding, thus repressing translation. Its main target seems to be the major flagellin gene, while its function is anatagonized by FliW.</text>
</comment>
<comment type="subunit">
    <text evidence="1">Homodimer; the beta-strands of each monomer intercalate to form a hydrophobic core, while the alpha-helices form wings that extend away from the core.</text>
</comment>
<comment type="subcellular location">
    <subcellularLocation>
        <location evidence="1">Cytoplasm</location>
    </subcellularLocation>
</comment>
<comment type="similarity">
    <text evidence="1">Belongs to the CsrA/RsmA family.</text>
</comment>
<feature type="chain" id="PRO_1000023372" description="Translational regulator CsrA">
    <location>
        <begin position="1"/>
        <end position="70"/>
    </location>
</feature>
<keyword id="KW-1005">Bacterial flagellum biogenesis</keyword>
<keyword id="KW-0963">Cytoplasm</keyword>
<keyword id="KW-1185">Reference proteome</keyword>
<keyword id="KW-0678">Repressor</keyword>
<keyword id="KW-0694">RNA-binding</keyword>
<keyword id="KW-0810">Translation regulation</keyword>
<proteinExistence type="inferred from homology"/>
<organism>
    <name type="scientific">Clostridioides difficile (strain 630)</name>
    <name type="common">Peptoclostridium difficile</name>
    <dbReference type="NCBI Taxonomy" id="272563"/>
    <lineage>
        <taxon>Bacteria</taxon>
        <taxon>Bacillati</taxon>
        <taxon>Bacillota</taxon>
        <taxon>Clostridia</taxon>
        <taxon>Peptostreptococcales</taxon>
        <taxon>Peptostreptococcaceae</taxon>
        <taxon>Clostridioides</taxon>
    </lineage>
</organism>
<dbReference type="EMBL" id="AM180355">
    <property type="protein sequence ID" value="CAJ67055.1"/>
    <property type="molecule type" value="Genomic_DNA"/>
</dbReference>
<dbReference type="RefSeq" id="WP_003425267.1">
    <property type="nucleotide sequence ID" value="NZ_JAUPES010000004.1"/>
</dbReference>
<dbReference type="RefSeq" id="YP_001086702.1">
    <property type="nucleotide sequence ID" value="NC_009089.1"/>
</dbReference>
<dbReference type="SMR" id="Q18CX3"/>
<dbReference type="STRING" id="272563.CD630_02340"/>
<dbReference type="EnsemblBacteria" id="CAJ67055">
    <property type="protein sequence ID" value="CAJ67055"/>
    <property type="gene ID" value="CD630_02340"/>
</dbReference>
<dbReference type="KEGG" id="cdf:CD630_02340"/>
<dbReference type="KEGG" id="pdc:CDIF630_00356"/>
<dbReference type="PATRIC" id="fig|272563.120.peg.250"/>
<dbReference type="eggNOG" id="COG1551">
    <property type="taxonomic scope" value="Bacteria"/>
</dbReference>
<dbReference type="OrthoDB" id="9809061at2"/>
<dbReference type="PhylomeDB" id="Q18CX3"/>
<dbReference type="BioCyc" id="PDIF272563:G12WB-337-MONOMER"/>
<dbReference type="PHI-base" id="PHI:11775"/>
<dbReference type="PHI-base" id="PHI:8117"/>
<dbReference type="Proteomes" id="UP000001978">
    <property type="component" value="Chromosome"/>
</dbReference>
<dbReference type="GO" id="GO:0005829">
    <property type="term" value="C:cytosol"/>
    <property type="evidence" value="ECO:0007669"/>
    <property type="project" value="TreeGrafter"/>
</dbReference>
<dbReference type="GO" id="GO:0048027">
    <property type="term" value="F:mRNA 5'-UTR binding"/>
    <property type="evidence" value="ECO:0007669"/>
    <property type="project" value="UniProtKB-UniRule"/>
</dbReference>
<dbReference type="GO" id="GO:0044781">
    <property type="term" value="P:bacterial-type flagellum organization"/>
    <property type="evidence" value="ECO:0007669"/>
    <property type="project" value="UniProtKB-KW"/>
</dbReference>
<dbReference type="GO" id="GO:0006402">
    <property type="term" value="P:mRNA catabolic process"/>
    <property type="evidence" value="ECO:0007669"/>
    <property type="project" value="InterPro"/>
</dbReference>
<dbReference type="GO" id="GO:0045947">
    <property type="term" value="P:negative regulation of translational initiation"/>
    <property type="evidence" value="ECO:0007669"/>
    <property type="project" value="UniProtKB-UniRule"/>
</dbReference>
<dbReference type="GO" id="GO:1902208">
    <property type="term" value="P:regulation of bacterial-type flagellum assembly"/>
    <property type="evidence" value="ECO:0007669"/>
    <property type="project" value="UniProtKB-UniRule"/>
</dbReference>
<dbReference type="GO" id="GO:0006109">
    <property type="term" value="P:regulation of carbohydrate metabolic process"/>
    <property type="evidence" value="ECO:0007669"/>
    <property type="project" value="InterPro"/>
</dbReference>
<dbReference type="FunFam" id="2.60.40.4380:FF:000002">
    <property type="entry name" value="Translational regulator CsrA"/>
    <property type="match status" value="1"/>
</dbReference>
<dbReference type="Gene3D" id="2.60.40.4380">
    <property type="entry name" value="Translational regulator CsrA"/>
    <property type="match status" value="1"/>
</dbReference>
<dbReference type="HAMAP" id="MF_00167">
    <property type="entry name" value="CsrA"/>
    <property type="match status" value="1"/>
</dbReference>
<dbReference type="InterPro" id="IPR003751">
    <property type="entry name" value="CsrA"/>
</dbReference>
<dbReference type="InterPro" id="IPR036107">
    <property type="entry name" value="CsrA_sf"/>
</dbReference>
<dbReference type="NCBIfam" id="TIGR00202">
    <property type="entry name" value="csrA"/>
    <property type="match status" value="1"/>
</dbReference>
<dbReference type="NCBIfam" id="NF002469">
    <property type="entry name" value="PRK01712.1"/>
    <property type="match status" value="1"/>
</dbReference>
<dbReference type="PANTHER" id="PTHR34984">
    <property type="entry name" value="CARBON STORAGE REGULATOR"/>
    <property type="match status" value="1"/>
</dbReference>
<dbReference type="PANTHER" id="PTHR34984:SF1">
    <property type="entry name" value="CARBON STORAGE REGULATOR"/>
    <property type="match status" value="1"/>
</dbReference>
<dbReference type="Pfam" id="PF02599">
    <property type="entry name" value="CsrA"/>
    <property type="match status" value="1"/>
</dbReference>
<dbReference type="SUPFAM" id="SSF117130">
    <property type="entry name" value="CsrA-like"/>
    <property type="match status" value="1"/>
</dbReference>
<name>CSRA_CLOD6</name>
<gene>
    <name evidence="1" type="primary">csrA</name>
    <name type="ordered locus">CD630_02340</name>
</gene>